<evidence type="ECO:0000255" key="1">
    <source>
        <dbReference type="HAMAP-Rule" id="MF_01197"/>
    </source>
</evidence>
<evidence type="ECO:0000256" key="2">
    <source>
        <dbReference type="SAM" id="MobiDB-lite"/>
    </source>
</evidence>
<feature type="chain" id="PRO_1000138478" description="Cell division protein SepF">
    <location>
        <begin position="1"/>
        <end position="179"/>
    </location>
</feature>
<feature type="region of interest" description="Disordered" evidence="2">
    <location>
        <begin position="18"/>
        <end position="55"/>
    </location>
</feature>
<feature type="compositionally biased region" description="Polar residues" evidence="2">
    <location>
        <begin position="34"/>
        <end position="55"/>
    </location>
</feature>
<sequence>MSLKDRFDRFIDYFTEDEDSSLPYEKRDEPVFTPVNSSQEPALPMNQPSQSAGTKENNITRLHARQQELANQSQRATDKVIIDVRYPRKYEDATEIVDLLAGNESILIDFQYMTEVQARRCLDYLDGACHVLAGNLKKVASTMYLLTPVNVIVNVEDIRLPDEDQQGEFGFDMKRNRVR</sequence>
<comment type="function">
    <text evidence="1">Cell division protein that is part of the divisome complex and is recruited early to the Z-ring. Probably stimulates Z-ring formation, perhaps through the cross-linking of FtsZ protofilaments. Its function overlaps with FtsA.</text>
</comment>
<comment type="subunit">
    <text evidence="1">Homodimer. Interacts with FtsZ.</text>
</comment>
<comment type="subcellular location">
    <subcellularLocation>
        <location evidence="1">Cytoplasm</location>
    </subcellularLocation>
    <text evidence="1">Localizes to the division site, in a FtsZ-dependent manner.</text>
</comment>
<comment type="similarity">
    <text evidence="1">Belongs to the SepF family.</text>
</comment>
<organism>
    <name type="scientific">Streptococcus pneumoniae (strain CGSP14)</name>
    <dbReference type="NCBI Taxonomy" id="516950"/>
    <lineage>
        <taxon>Bacteria</taxon>
        <taxon>Bacillati</taxon>
        <taxon>Bacillota</taxon>
        <taxon>Bacilli</taxon>
        <taxon>Lactobacillales</taxon>
        <taxon>Streptococcaceae</taxon>
        <taxon>Streptococcus</taxon>
    </lineage>
</organism>
<dbReference type="EMBL" id="CP001033">
    <property type="protein sequence ID" value="ACB90888.1"/>
    <property type="molecule type" value="Genomic_DNA"/>
</dbReference>
<dbReference type="RefSeq" id="WP_000053385.1">
    <property type="nucleotide sequence ID" value="NC_010582.1"/>
</dbReference>
<dbReference type="SMR" id="B2IRR9"/>
<dbReference type="KEGG" id="spw:SPCG_1636"/>
<dbReference type="HOGENOM" id="CLU_078499_2_0_9"/>
<dbReference type="GO" id="GO:0005737">
    <property type="term" value="C:cytoplasm"/>
    <property type="evidence" value="ECO:0007669"/>
    <property type="project" value="UniProtKB-SubCell"/>
</dbReference>
<dbReference type="GO" id="GO:0000917">
    <property type="term" value="P:division septum assembly"/>
    <property type="evidence" value="ECO:0007669"/>
    <property type="project" value="UniProtKB-KW"/>
</dbReference>
<dbReference type="GO" id="GO:0043093">
    <property type="term" value="P:FtsZ-dependent cytokinesis"/>
    <property type="evidence" value="ECO:0007669"/>
    <property type="project" value="UniProtKB-UniRule"/>
</dbReference>
<dbReference type="Gene3D" id="3.30.110.150">
    <property type="entry name" value="SepF-like protein"/>
    <property type="match status" value="1"/>
</dbReference>
<dbReference type="HAMAP" id="MF_01197">
    <property type="entry name" value="SepF"/>
    <property type="match status" value="1"/>
</dbReference>
<dbReference type="InterPro" id="IPR023052">
    <property type="entry name" value="Cell_div_SepF"/>
</dbReference>
<dbReference type="InterPro" id="IPR007561">
    <property type="entry name" value="Cell_div_SepF/SepF-rel"/>
</dbReference>
<dbReference type="InterPro" id="IPR038594">
    <property type="entry name" value="SepF-like_sf"/>
</dbReference>
<dbReference type="PANTHER" id="PTHR35798">
    <property type="entry name" value="CELL DIVISION PROTEIN SEPF"/>
    <property type="match status" value="1"/>
</dbReference>
<dbReference type="PANTHER" id="PTHR35798:SF1">
    <property type="entry name" value="CELL DIVISION PROTEIN SEPF"/>
    <property type="match status" value="1"/>
</dbReference>
<dbReference type="Pfam" id="PF04472">
    <property type="entry name" value="SepF"/>
    <property type="match status" value="1"/>
</dbReference>
<proteinExistence type="inferred from homology"/>
<name>SEPF_STRPS</name>
<protein>
    <recommendedName>
        <fullName evidence="1">Cell division protein SepF</fullName>
    </recommendedName>
</protein>
<gene>
    <name evidence="1" type="primary">sepF</name>
    <name type="ordered locus">SPCG_1636</name>
</gene>
<reference key="1">
    <citation type="journal article" date="2009" name="BMC Genomics">
        <title>Genome evolution driven by host adaptations results in a more virulent and antimicrobial-resistant Streptococcus pneumoniae serotype 14.</title>
        <authorList>
            <person name="Ding F."/>
            <person name="Tang P."/>
            <person name="Hsu M.-H."/>
            <person name="Cui P."/>
            <person name="Hu S."/>
            <person name="Yu J."/>
            <person name="Chiu C.-H."/>
        </authorList>
    </citation>
    <scope>NUCLEOTIDE SEQUENCE [LARGE SCALE GENOMIC DNA]</scope>
    <source>
        <strain>CGSP14</strain>
    </source>
</reference>
<accession>B2IRR9</accession>
<keyword id="KW-0131">Cell cycle</keyword>
<keyword id="KW-0132">Cell division</keyword>
<keyword id="KW-0963">Cytoplasm</keyword>
<keyword id="KW-0717">Septation</keyword>